<protein>
    <recommendedName>
        <fullName evidence="1">Adenine phosphoribosyltransferase</fullName>
        <shortName evidence="1">APRT</shortName>
        <ecNumber evidence="1">2.4.2.7</ecNumber>
    </recommendedName>
</protein>
<keyword id="KW-0963">Cytoplasm</keyword>
<keyword id="KW-0328">Glycosyltransferase</keyword>
<keyword id="KW-0660">Purine salvage</keyword>
<keyword id="KW-0808">Transferase</keyword>
<accession>Q8E4W5</accession>
<gene>
    <name evidence="1" type="primary">apt</name>
    <name type="ordered locus">gbs1278</name>
</gene>
<sequence>MDLNNYIASIENYPQEGITFRDISPLMADGKAYSYAVREIVQYAADKDIDMIVGPEARGFIVGCPVAYALGIGFAPVRKPGKLPREVISADYEKEYGLDTLTMHADAIKPGQRVLIVDDLLATGGTVKATIEMIEKLGGVVAGCAFLVELDGLNGRKAIEGYDTKVLMNFPG</sequence>
<name>APT_STRA3</name>
<comment type="function">
    <text evidence="1">Catalyzes a salvage reaction resulting in the formation of AMP, that is energically less costly than de novo synthesis.</text>
</comment>
<comment type="catalytic activity">
    <reaction evidence="1">
        <text>AMP + diphosphate = 5-phospho-alpha-D-ribose 1-diphosphate + adenine</text>
        <dbReference type="Rhea" id="RHEA:16609"/>
        <dbReference type="ChEBI" id="CHEBI:16708"/>
        <dbReference type="ChEBI" id="CHEBI:33019"/>
        <dbReference type="ChEBI" id="CHEBI:58017"/>
        <dbReference type="ChEBI" id="CHEBI:456215"/>
        <dbReference type="EC" id="2.4.2.7"/>
    </reaction>
</comment>
<comment type="pathway">
    <text evidence="1">Purine metabolism; AMP biosynthesis via salvage pathway; AMP from adenine: step 1/1.</text>
</comment>
<comment type="subunit">
    <text evidence="1">Homodimer.</text>
</comment>
<comment type="subcellular location">
    <subcellularLocation>
        <location evidence="1">Cytoplasm</location>
    </subcellularLocation>
</comment>
<comment type="similarity">
    <text evidence="1">Belongs to the purine/pyrimidine phosphoribosyltransferase family.</text>
</comment>
<proteinExistence type="inferred from homology"/>
<organism>
    <name type="scientific">Streptococcus agalactiae serotype III (strain NEM316)</name>
    <dbReference type="NCBI Taxonomy" id="211110"/>
    <lineage>
        <taxon>Bacteria</taxon>
        <taxon>Bacillati</taxon>
        <taxon>Bacillota</taxon>
        <taxon>Bacilli</taxon>
        <taxon>Lactobacillales</taxon>
        <taxon>Streptococcaceae</taxon>
        <taxon>Streptococcus</taxon>
    </lineage>
</organism>
<reference key="1">
    <citation type="journal article" date="2002" name="Mol. Microbiol.">
        <title>Genome sequence of Streptococcus agalactiae, a pathogen causing invasive neonatal disease.</title>
        <authorList>
            <person name="Glaser P."/>
            <person name="Rusniok C."/>
            <person name="Buchrieser C."/>
            <person name="Chevalier F."/>
            <person name="Frangeul L."/>
            <person name="Msadek T."/>
            <person name="Zouine M."/>
            <person name="Couve E."/>
            <person name="Lalioui L."/>
            <person name="Poyart C."/>
            <person name="Trieu-Cuot P."/>
            <person name="Kunst F."/>
        </authorList>
    </citation>
    <scope>NUCLEOTIDE SEQUENCE [LARGE SCALE GENOMIC DNA]</scope>
    <source>
        <strain>NEM316</strain>
    </source>
</reference>
<feature type="chain" id="PRO_0000149458" description="Adenine phosphoribosyltransferase">
    <location>
        <begin position="1"/>
        <end position="172"/>
    </location>
</feature>
<dbReference type="EC" id="2.4.2.7" evidence="1"/>
<dbReference type="EMBL" id="AL766850">
    <property type="protein sequence ID" value="CAD46937.1"/>
    <property type="molecule type" value="Genomic_DNA"/>
</dbReference>
<dbReference type="RefSeq" id="WP_000365343.1">
    <property type="nucleotide sequence ID" value="NC_004368.1"/>
</dbReference>
<dbReference type="SMR" id="Q8E4W5"/>
<dbReference type="KEGG" id="san:gbs1278"/>
<dbReference type="eggNOG" id="COG0503">
    <property type="taxonomic scope" value="Bacteria"/>
</dbReference>
<dbReference type="HOGENOM" id="CLU_063339_3_0_9"/>
<dbReference type="UniPathway" id="UPA00588">
    <property type="reaction ID" value="UER00646"/>
</dbReference>
<dbReference type="Proteomes" id="UP000000823">
    <property type="component" value="Chromosome"/>
</dbReference>
<dbReference type="GO" id="GO:0005737">
    <property type="term" value="C:cytoplasm"/>
    <property type="evidence" value="ECO:0007669"/>
    <property type="project" value="UniProtKB-SubCell"/>
</dbReference>
<dbReference type="GO" id="GO:0002055">
    <property type="term" value="F:adenine binding"/>
    <property type="evidence" value="ECO:0007669"/>
    <property type="project" value="TreeGrafter"/>
</dbReference>
<dbReference type="GO" id="GO:0003999">
    <property type="term" value="F:adenine phosphoribosyltransferase activity"/>
    <property type="evidence" value="ECO:0007669"/>
    <property type="project" value="UniProtKB-UniRule"/>
</dbReference>
<dbReference type="GO" id="GO:0016208">
    <property type="term" value="F:AMP binding"/>
    <property type="evidence" value="ECO:0007669"/>
    <property type="project" value="TreeGrafter"/>
</dbReference>
<dbReference type="GO" id="GO:0006168">
    <property type="term" value="P:adenine salvage"/>
    <property type="evidence" value="ECO:0007669"/>
    <property type="project" value="InterPro"/>
</dbReference>
<dbReference type="GO" id="GO:0044209">
    <property type="term" value="P:AMP salvage"/>
    <property type="evidence" value="ECO:0007669"/>
    <property type="project" value="UniProtKB-UniRule"/>
</dbReference>
<dbReference type="GO" id="GO:0006166">
    <property type="term" value="P:purine ribonucleoside salvage"/>
    <property type="evidence" value="ECO:0007669"/>
    <property type="project" value="UniProtKB-KW"/>
</dbReference>
<dbReference type="CDD" id="cd06223">
    <property type="entry name" value="PRTases_typeI"/>
    <property type="match status" value="1"/>
</dbReference>
<dbReference type="FunFam" id="3.40.50.2020:FF:000004">
    <property type="entry name" value="Adenine phosphoribosyltransferase"/>
    <property type="match status" value="1"/>
</dbReference>
<dbReference type="Gene3D" id="3.40.50.2020">
    <property type="match status" value="1"/>
</dbReference>
<dbReference type="HAMAP" id="MF_00004">
    <property type="entry name" value="Aden_phosphoribosyltr"/>
    <property type="match status" value="1"/>
</dbReference>
<dbReference type="InterPro" id="IPR005764">
    <property type="entry name" value="Ade_phspho_trans"/>
</dbReference>
<dbReference type="InterPro" id="IPR000836">
    <property type="entry name" value="PRibTrfase_dom"/>
</dbReference>
<dbReference type="InterPro" id="IPR029057">
    <property type="entry name" value="PRTase-like"/>
</dbReference>
<dbReference type="InterPro" id="IPR050054">
    <property type="entry name" value="UPRTase/APRTase"/>
</dbReference>
<dbReference type="NCBIfam" id="TIGR01090">
    <property type="entry name" value="apt"/>
    <property type="match status" value="1"/>
</dbReference>
<dbReference type="NCBIfam" id="NF002633">
    <property type="entry name" value="PRK02304.1-2"/>
    <property type="match status" value="1"/>
</dbReference>
<dbReference type="NCBIfam" id="NF002634">
    <property type="entry name" value="PRK02304.1-3"/>
    <property type="match status" value="1"/>
</dbReference>
<dbReference type="NCBIfam" id="NF002636">
    <property type="entry name" value="PRK02304.1-5"/>
    <property type="match status" value="1"/>
</dbReference>
<dbReference type="PANTHER" id="PTHR32315">
    <property type="entry name" value="ADENINE PHOSPHORIBOSYLTRANSFERASE"/>
    <property type="match status" value="1"/>
</dbReference>
<dbReference type="PANTHER" id="PTHR32315:SF3">
    <property type="entry name" value="ADENINE PHOSPHORIBOSYLTRANSFERASE"/>
    <property type="match status" value="1"/>
</dbReference>
<dbReference type="Pfam" id="PF00156">
    <property type="entry name" value="Pribosyltran"/>
    <property type="match status" value="1"/>
</dbReference>
<dbReference type="SUPFAM" id="SSF53271">
    <property type="entry name" value="PRTase-like"/>
    <property type="match status" value="1"/>
</dbReference>
<dbReference type="PROSITE" id="PS00103">
    <property type="entry name" value="PUR_PYR_PR_TRANSFER"/>
    <property type="match status" value="1"/>
</dbReference>
<evidence type="ECO:0000255" key="1">
    <source>
        <dbReference type="HAMAP-Rule" id="MF_00004"/>
    </source>
</evidence>